<reference key="1">
    <citation type="submission" date="2008-04" db="EMBL/GenBank/DDBJ databases">
        <title>Complete sequence of Clostridium botulinum strain Eklund.</title>
        <authorList>
            <person name="Brinkac L.M."/>
            <person name="Brown J.L."/>
            <person name="Bruce D."/>
            <person name="Detter C."/>
            <person name="Munk C."/>
            <person name="Smith L.A."/>
            <person name="Smith T.J."/>
            <person name="Sutton G."/>
            <person name="Brettin T.S."/>
        </authorList>
    </citation>
    <scope>NUCLEOTIDE SEQUENCE [LARGE SCALE GENOMIC DNA]</scope>
    <source>
        <strain>Eklund 17B / Type B</strain>
    </source>
</reference>
<gene>
    <name evidence="1" type="primary">thrS</name>
    <name type="ordered locus">CLL_A0348</name>
</gene>
<proteinExistence type="inferred from homology"/>
<name>SYT_CLOBB</name>
<feature type="chain" id="PRO_1000098561" description="Threonine--tRNA ligase">
    <location>
        <begin position="1"/>
        <end position="643"/>
    </location>
</feature>
<feature type="domain" description="TGS" evidence="2">
    <location>
        <begin position="1"/>
        <end position="61"/>
    </location>
</feature>
<feature type="region of interest" description="Catalytic" evidence="1">
    <location>
        <begin position="240"/>
        <end position="540"/>
    </location>
</feature>
<feature type="binding site" evidence="1">
    <location>
        <position position="335"/>
    </location>
    <ligand>
        <name>Zn(2+)</name>
        <dbReference type="ChEBI" id="CHEBI:29105"/>
    </ligand>
</feature>
<feature type="binding site" evidence="1">
    <location>
        <position position="386"/>
    </location>
    <ligand>
        <name>Zn(2+)</name>
        <dbReference type="ChEBI" id="CHEBI:29105"/>
    </ligand>
</feature>
<feature type="binding site" evidence="1">
    <location>
        <position position="517"/>
    </location>
    <ligand>
        <name>Zn(2+)</name>
        <dbReference type="ChEBI" id="CHEBI:29105"/>
    </ligand>
</feature>
<accession>B2TIT5</accession>
<protein>
    <recommendedName>
        <fullName evidence="1">Threonine--tRNA ligase</fullName>
        <ecNumber evidence="1">6.1.1.3</ecNumber>
    </recommendedName>
    <alternativeName>
        <fullName evidence="1">Threonyl-tRNA synthetase</fullName>
        <shortName evidence="1">ThrRS</shortName>
    </alternativeName>
</protein>
<organism>
    <name type="scientific">Clostridium botulinum (strain Eklund 17B / Type B)</name>
    <dbReference type="NCBI Taxonomy" id="935198"/>
    <lineage>
        <taxon>Bacteria</taxon>
        <taxon>Bacillati</taxon>
        <taxon>Bacillota</taxon>
        <taxon>Clostridia</taxon>
        <taxon>Eubacteriales</taxon>
        <taxon>Clostridiaceae</taxon>
        <taxon>Clostridium</taxon>
    </lineage>
</organism>
<evidence type="ECO:0000255" key="1">
    <source>
        <dbReference type="HAMAP-Rule" id="MF_00184"/>
    </source>
</evidence>
<evidence type="ECO:0000255" key="2">
    <source>
        <dbReference type="PROSITE-ProRule" id="PRU01228"/>
    </source>
</evidence>
<keyword id="KW-0030">Aminoacyl-tRNA synthetase</keyword>
<keyword id="KW-0067">ATP-binding</keyword>
<keyword id="KW-0963">Cytoplasm</keyword>
<keyword id="KW-0436">Ligase</keyword>
<keyword id="KW-0479">Metal-binding</keyword>
<keyword id="KW-0547">Nucleotide-binding</keyword>
<keyword id="KW-0648">Protein biosynthesis</keyword>
<keyword id="KW-0694">RNA-binding</keyword>
<keyword id="KW-0820">tRNA-binding</keyword>
<keyword id="KW-0862">Zinc</keyword>
<dbReference type="EC" id="6.1.1.3" evidence="1"/>
<dbReference type="EMBL" id="CP001056">
    <property type="protein sequence ID" value="ACD22278.1"/>
    <property type="molecule type" value="Genomic_DNA"/>
</dbReference>
<dbReference type="SMR" id="B2TIT5"/>
<dbReference type="KEGG" id="cbk:CLL_A0348"/>
<dbReference type="PATRIC" id="fig|935198.13.peg.324"/>
<dbReference type="HOGENOM" id="CLU_008554_0_1_9"/>
<dbReference type="Proteomes" id="UP000001195">
    <property type="component" value="Chromosome"/>
</dbReference>
<dbReference type="GO" id="GO:0005737">
    <property type="term" value="C:cytoplasm"/>
    <property type="evidence" value="ECO:0007669"/>
    <property type="project" value="UniProtKB-SubCell"/>
</dbReference>
<dbReference type="GO" id="GO:0005524">
    <property type="term" value="F:ATP binding"/>
    <property type="evidence" value="ECO:0007669"/>
    <property type="project" value="UniProtKB-UniRule"/>
</dbReference>
<dbReference type="GO" id="GO:0140096">
    <property type="term" value="F:catalytic activity, acting on a protein"/>
    <property type="evidence" value="ECO:0007669"/>
    <property type="project" value="UniProtKB-ARBA"/>
</dbReference>
<dbReference type="GO" id="GO:0046872">
    <property type="term" value="F:metal ion binding"/>
    <property type="evidence" value="ECO:0007669"/>
    <property type="project" value="UniProtKB-KW"/>
</dbReference>
<dbReference type="GO" id="GO:0004829">
    <property type="term" value="F:threonine-tRNA ligase activity"/>
    <property type="evidence" value="ECO:0007669"/>
    <property type="project" value="UniProtKB-UniRule"/>
</dbReference>
<dbReference type="GO" id="GO:0016740">
    <property type="term" value="F:transferase activity"/>
    <property type="evidence" value="ECO:0007669"/>
    <property type="project" value="UniProtKB-ARBA"/>
</dbReference>
<dbReference type="GO" id="GO:0000049">
    <property type="term" value="F:tRNA binding"/>
    <property type="evidence" value="ECO:0007669"/>
    <property type="project" value="UniProtKB-KW"/>
</dbReference>
<dbReference type="GO" id="GO:0006435">
    <property type="term" value="P:threonyl-tRNA aminoacylation"/>
    <property type="evidence" value="ECO:0007669"/>
    <property type="project" value="UniProtKB-UniRule"/>
</dbReference>
<dbReference type="CDD" id="cd01667">
    <property type="entry name" value="TGS_ThrRS"/>
    <property type="match status" value="1"/>
</dbReference>
<dbReference type="CDD" id="cd00860">
    <property type="entry name" value="ThrRS_anticodon"/>
    <property type="match status" value="1"/>
</dbReference>
<dbReference type="CDD" id="cd00771">
    <property type="entry name" value="ThrRS_core"/>
    <property type="match status" value="1"/>
</dbReference>
<dbReference type="FunFam" id="3.30.54.20:FF:000002">
    <property type="entry name" value="Threonine--tRNA ligase"/>
    <property type="match status" value="1"/>
</dbReference>
<dbReference type="FunFam" id="3.30.930.10:FF:000002">
    <property type="entry name" value="Threonine--tRNA ligase"/>
    <property type="match status" value="1"/>
</dbReference>
<dbReference type="FunFam" id="3.40.50.800:FF:000001">
    <property type="entry name" value="Threonine--tRNA ligase"/>
    <property type="match status" value="1"/>
</dbReference>
<dbReference type="FunFam" id="3.30.980.10:FF:000005">
    <property type="entry name" value="Threonyl-tRNA synthetase, mitochondrial"/>
    <property type="match status" value="1"/>
</dbReference>
<dbReference type="Gene3D" id="3.10.20.30">
    <property type="match status" value="1"/>
</dbReference>
<dbReference type="Gene3D" id="3.30.54.20">
    <property type="match status" value="1"/>
</dbReference>
<dbReference type="Gene3D" id="3.40.50.800">
    <property type="entry name" value="Anticodon-binding domain"/>
    <property type="match status" value="1"/>
</dbReference>
<dbReference type="Gene3D" id="3.30.930.10">
    <property type="entry name" value="Bira Bifunctional Protein, Domain 2"/>
    <property type="match status" value="1"/>
</dbReference>
<dbReference type="Gene3D" id="3.30.980.10">
    <property type="entry name" value="Threonyl-trna Synthetase, Chain A, domain 2"/>
    <property type="match status" value="1"/>
</dbReference>
<dbReference type="HAMAP" id="MF_00184">
    <property type="entry name" value="Thr_tRNA_synth"/>
    <property type="match status" value="1"/>
</dbReference>
<dbReference type="InterPro" id="IPR002314">
    <property type="entry name" value="aa-tRNA-synt_IIb"/>
</dbReference>
<dbReference type="InterPro" id="IPR006195">
    <property type="entry name" value="aa-tRNA-synth_II"/>
</dbReference>
<dbReference type="InterPro" id="IPR045864">
    <property type="entry name" value="aa-tRNA-synth_II/BPL/LPL"/>
</dbReference>
<dbReference type="InterPro" id="IPR004154">
    <property type="entry name" value="Anticodon-bd"/>
</dbReference>
<dbReference type="InterPro" id="IPR036621">
    <property type="entry name" value="Anticodon-bd_dom_sf"/>
</dbReference>
<dbReference type="InterPro" id="IPR012675">
    <property type="entry name" value="Beta-grasp_dom_sf"/>
</dbReference>
<dbReference type="InterPro" id="IPR004095">
    <property type="entry name" value="TGS"/>
</dbReference>
<dbReference type="InterPro" id="IPR012676">
    <property type="entry name" value="TGS-like"/>
</dbReference>
<dbReference type="InterPro" id="IPR002320">
    <property type="entry name" value="Thr-tRNA-ligase_IIa"/>
</dbReference>
<dbReference type="InterPro" id="IPR018163">
    <property type="entry name" value="Thr/Ala-tRNA-synth_IIc_edit"/>
</dbReference>
<dbReference type="InterPro" id="IPR047246">
    <property type="entry name" value="ThrRS_anticodon"/>
</dbReference>
<dbReference type="InterPro" id="IPR033728">
    <property type="entry name" value="ThrRS_core"/>
</dbReference>
<dbReference type="InterPro" id="IPR012947">
    <property type="entry name" value="tRNA_SAD"/>
</dbReference>
<dbReference type="NCBIfam" id="TIGR00418">
    <property type="entry name" value="thrS"/>
    <property type="match status" value="1"/>
</dbReference>
<dbReference type="PANTHER" id="PTHR11451:SF56">
    <property type="entry name" value="THREONINE--TRNA LIGASE 1"/>
    <property type="match status" value="1"/>
</dbReference>
<dbReference type="PANTHER" id="PTHR11451">
    <property type="entry name" value="THREONINE-TRNA LIGASE"/>
    <property type="match status" value="1"/>
</dbReference>
<dbReference type="Pfam" id="PF03129">
    <property type="entry name" value="HGTP_anticodon"/>
    <property type="match status" value="1"/>
</dbReference>
<dbReference type="Pfam" id="PF02824">
    <property type="entry name" value="TGS"/>
    <property type="match status" value="1"/>
</dbReference>
<dbReference type="Pfam" id="PF00587">
    <property type="entry name" value="tRNA-synt_2b"/>
    <property type="match status" value="1"/>
</dbReference>
<dbReference type="Pfam" id="PF07973">
    <property type="entry name" value="tRNA_SAD"/>
    <property type="match status" value="1"/>
</dbReference>
<dbReference type="PRINTS" id="PR01047">
    <property type="entry name" value="TRNASYNTHTHR"/>
</dbReference>
<dbReference type="SMART" id="SM00863">
    <property type="entry name" value="tRNA_SAD"/>
    <property type="match status" value="1"/>
</dbReference>
<dbReference type="SUPFAM" id="SSF52954">
    <property type="entry name" value="Class II aaRS ABD-related"/>
    <property type="match status" value="1"/>
</dbReference>
<dbReference type="SUPFAM" id="SSF55681">
    <property type="entry name" value="Class II aaRS and biotin synthetases"/>
    <property type="match status" value="1"/>
</dbReference>
<dbReference type="SUPFAM" id="SSF81271">
    <property type="entry name" value="TGS-like"/>
    <property type="match status" value="1"/>
</dbReference>
<dbReference type="SUPFAM" id="SSF55186">
    <property type="entry name" value="ThrRS/AlaRS common domain"/>
    <property type="match status" value="1"/>
</dbReference>
<dbReference type="PROSITE" id="PS50862">
    <property type="entry name" value="AA_TRNA_LIGASE_II"/>
    <property type="match status" value="1"/>
</dbReference>
<dbReference type="PROSITE" id="PS51880">
    <property type="entry name" value="TGS"/>
    <property type="match status" value="1"/>
</dbReference>
<sequence length="643" mass="73810">MIKVTLKDGSVKEFEAGLSVYEIAKSISEGLARNACCGVVNGKVCDLREEVKEDVSLSICTFDSQEGKDAVRHSISHVLAYAVKRLFPETKLAIGPSIATGFYYDFDKDVAFSAQDLEKLEAEMKKIIKENPSIEKFELPRNEALELMKDEPYKVELINDLGEDEIISFYKLGEFTDLCAGPHVMSLKPIKAIKLIRSAGAYWKGDEKNKMLTRIYGTAFLKKSELDEYLDAVEEAKKRDHNKLGRELKLFTTDENVGQGLPLLMPKGAKIVQTLQRWVEDEEERRGYVLTKTPLMAKSDLYKISGHWDHYKDGMFVLGDEEKDEEVFALRPMTCPFQYTIYNAEQHSYRDLPIRYGETSTLFRNESSGEMHGLIRVRQFTLADGHLIVTPEQLEEEFKGVLELIQYLMKTLGIDEDISYRFSKWDPNNTEKYINDPEAWNKTQDTMRTILDHLKINYVEADDEAAFYGPKLDLQCRNVHGKEDTLFTVQIDFALAERFDMSYIDKNGEKKRPYIIHRSSIGCYERTLAMLIEKYAGAFPTWLSPVQVKVLPISDKYNDYAESVVKSLRNKGVRIEADYRAEKIGYKIREARLERTPYILVVGEKEAANNEVSVRSRKNDDEGAIKLDAFTERLLNEIATKER</sequence>
<comment type="function">
    <text evidence="1">Catalyzes the attachment of threonine to tRNA(Thr) in a two-step reaction: L-threonine is first activated by ATP to form Thr-AMP and then transferred to the acceptor end of tRNA(Thr). Also edits incorrectly charged L-seryl-tRNA(Thr).</text>
</comment>
<comment type="catalytic activity">
    <reaction evidence="1">
        <text>tRNA(Thr) + L-threonine + ATP = L-threonyl-tRNA(Thr) + AMP + diphosphate + H(+)</text>
        <dbReference type="Rhea" id="RHEA:24624"/>
        <dbReference type="Rhea" id="RHEA-COMP:9670"/>
        <dbReference type="Rhea" id="RHEA-COMP:9704"/>
        <dbReference type="ChEBI" id="CHEBI:15378"/>
        <dbReference type="ChEBI" id="CHEBI:30616"/>
        <dbReference type="ChEBI" id="CHEBI:33019"/>
        <dbReference type="ChEBI" id="CHEBI:57926"/>
        <dbReference type="ChEBI" id="CHEBI:78442"/>
        <dbReference type="ChEBI" id="CHEBI:78534"/>
        <dbReference type="ChEBI" id="CHEBI:456215"/>
        <dbReference type="EC" id="6.1.1.3"/>
    </reaction>
</comment>
<comment type="cofactor">
    <cofactor evidence="1">
        <name>Zn(2+)</name>
        <dbReference type="ChEBI" id="CHEBI:29105"/>
    </cofactor>
    <text evidence="1">Binds 1 zinc ion per subunit.</text>
</comment>
<comment type="subunit">
    <text evidence="1">Homodimer.</text>
</comment>
<comment type="subcellular location">
    <subcellularLocation>
        <location evidence="1">Cytoplasm</location>
    </subcellularLocation>
</comment>
<comment type="similarity">
    <text evidence="1">Belongs to the class-II aminoacyl-tRNA synthetase family.</text>
</comment>